<evidence type="ECO:0000255" key="1">
    <source>
        <dbReference type="HAMAP-Rule" id="MF_00009"/>
    </source>
</evidence>
<organism>
    <name type="scientific">Mycolicibacterium paratuberculosis (strain ATCC BAA-968 / K-10)</name>
    <name type="common">Mycobacterium paratuberculosis</name>
    <dbReference type="NCBI Taxonomy" id="262316"/>
    <lineage>
        <taxon>Bacteria</taxon>
        <taxon>Bacillati</taxon>
        <taxon>Actinomycetota</taxon>
        <taxon>Actinomycetes</taxon>
        <taxon>Mycobacteriales</taxon>
        <taxon>Mycobacteriaceae</taxon>
        <taxon>Mycobacterium</taxon>
        <taxon>Mycobacterium avium complex (MAC)</taxon>
    </lineage>
</organism>
<keyword id="KW-0963">Cytoplasm</keyword>
<keyword id="KW-0255">Endonuclease</keyword>
<keyword id="KW-0378">Hydrolase</keyword>
<keyword id="KW-0479">Metal-binding</keyword>
<keyword id="KW-0540">Nuclease</keyword>
<keyword id="KW-1185">Reference proteome</keyword>
<keyword id="KW-0690">Ribosome biogenesis</keyword>
<keyword id="KW-0698">rRNA processing</keyword>
<keyword id="KW-0862">Zinc</keyword>
<accession>Q73XZ9</accession>
<proteinExistence type="inferred from homology"/>
<reference key="1">
    <citation type="journal article" date="2005" name="Proc. Natl. Acad. Sci. U.S.A.">
        <title>The complete genome sequence of Mycobacterium avium subspecies paratuberculosis.</title>
        <authorList>
            <person name="Li L."/>
            <person name="Bannantine J.P."/>
            <person name="Zhang Q."/>
            <person name="Amonsin A."/>
            <person name="May B.J."/>
            <person name="Alt D."/>
            <person name="Banerji N."/>
            <person name="Kanjilal S."/>
            <person name="Kapur V."/>
        </authorList>
    </citation>
    <scope>NUCLEOTIDE SEQUENCE [LARGE SCALE GENOMIC DNA]</scope>
    <source>
        <strain>ATCC BAA-968 / K-10</strain>
    </source>
</reference>
<sequence>MSIEVSNESGIDVSEAELISVARFVIAKMDVNPAAELSMVLLDTAAMADLHMRWMDLPGPTDVMSFPMDELEPGGRPDAPEPGPAMLGDIVLCPEFAADQAAAAGHSLGHELALLTIHGVLHLLGYDHGEPDEEKEMFALQDRLLEEWVADQVEAYHQDRQQERDRRLLDKSRYFDH</sequence>
<gene>
    <name evidence="1" type="primary">ybeY</name>
    <name type="ordered locus">MAP_2159c</name>
</gene>
<feature type="chain" id="PRO_0000102491" description="Endoribonuclease YbeY">
    <location>
        <begin position="1"/>
        <end position="177"/>
    </location>
</feature>
<feature type="binding site" evidence="1">
    <location>
        <position position="118"/>
    </location>
    <ligand>
        <name>Zn(2+)</name>
        <dbReference type="ChEBI" id="CHEBI:29105"/>
        <note>catalytic</note>
    </ligand>
</feature>
<feature type="binding site" evidence="1">
    <location>
        <position position="122"/>
    </location>
    <ligand>
        <name>Zn(2+)</name>
        <dbReference type="ChEBI" id="CHEBI:29105"/>
        <note>catalytic</note>
    </ligand>
</feature>
<feature type="binding site" evidence="1">
    <location>
        <position position="128"/>
    </location>
    <ligand>
        <name>Zn(2+)</name>
        <dbReference type="ChEBI" id="CHEBI:29105"/>
        <note>catalytic</note>
    </ligand>
</feature>
<dbReference type="EC" id="3.1.-.-" evidence="1"/>
<dbReference type="EMBL" id="AE016958">
    <property type="protein sequence ID" value="AAS04476.1"/>
    <property type="molecule type" value="Genomic_DNA"/>
</dbReference>
<dbReference type="RefSeq" id="WP_003876007.1">
    <property type="nucleotide sequence ID" value="NZ_CP106873.1"/>
</dbReference>
<dbReference type="SMR" id="Q73XZ9"/>
<dbReference type="STRING" id="262316.MAP_2159c"/>
<dbReference type="KEGG" id="mpa:MAP_2159c"/>
<dbReference type="PATRIC" id="fig|262316.17.peg.2296"/>
<dbReference type="eggNOG" id="COG0319">
    <property type="taxonomic scope" value="Bacteria"/>
</dbReference>
<dbReference type="HOGENOM" id="CLU_106710_3_2_11"/>
<dbReference type="Proteomes" id="UP000000580">
    <property type="component" value="Chromosome"/>
</dbReference>
<dbReference type="GO" id="GO:0005737">
    <property type="term" value="C:cytoplasm"/>
    <property type="evidence" value="ECO:0007669"/>
    <property type="project" value="UniProtKB-SubCell"/>
</dbReference>
<dbReference type="GO" id="GO:0004222">
    <property type="term" value="F:metalloendopeptidase activity"/>
    <property type="evidence" value="ECO:0007669"/>
    <property type="project" value="InterPro"/>
</dbReference>
<dbReference type="GO" id="GO:0004521">
    <property type="term" value="F:RNA endonuclease activity"/>
    <property type="evidence" value="ECO:0007669"/>
    <property type="project" value="UniProtKB-UniRule"/>
</dbReference>
<dbReference type="GO" id="GO:0008270">
    <property type="term" value="F:zinc ion binding"/>
    <property type="evidence" value="ECO:0007669"/>
    <property type="project" value="UniProtKB-UniRule"/>
</dbReference>
<dbReference type="GO" id="GO:0006364">
    <property type="term" value="P:rRNA processing"/>
    <property type="evidence" value="ECO:0007669"/>
    <property type="project" value="UniProtKB-UniRule"/>
</dbReference>
<dbReference type="Gene3D" id="3.40.390.30">
    <property type="entry name" value="Metalloproteases ('zincins'), catalytic domain"/>
    <property type="match status" value="1"/>
</dbReference>
<dbReference type="HAMAP" id="MF_00009">
    <property type="entry name" value="Endoribonucl_YbeY"/>
    <property type="match status" value="1"/>
</dbReference>
<dbReference type="InterPro" id="IPR023091">
    <property type="entry name" value="MetalPrtase_cat_dom_sf_prd"/>
</dbReference>
<dbReference type="InterPro" id="IPR002036">
    <property type="entry name" value="YbeY"/>
</dbReference>
<dbReference type="InterPro" id="IPR020549">
    <property type="entry name" value="YbeY_CS"/>
</dbReference>
<dbReference type="NCBIfam" id="TIGR00043">
    <property type="entry name" value="rRNA maturation RNase YbeY"/>
    <property type="match status" value="1"/>
</dbReference>
<dbReference type="PANTHER" id="PTHR46986">
    <property type="entry name" value="ENDORIBONUCLEASE YBEY, CHLOROPLASTIC"/>
    <property type="match status" value="1"/>
</dbReference>
<dbReference type="PANTHER" id="PTHR46986:SF1">
    <property type="entry name" value="ENDORIBONUCLEASE YBEY, CHLOROPLASTIC"/>
    <property type="match status" value="1"/>
</dbReference>
<dbReference type="Pfam" id="PF02130">
    <property type="entry name" value="YbeY"/>
    <property type="match status" value="1"/>
</dbReference>
<dbReference type="SUPFAM" id="SSF55486">
    <property type="entry name" value="Metalloproteases ('zincins'), catalytic domain"/>
    <property type="match status" value="1"/>
</dbReference>
<dbReference type="PROSITE" id="PS01306">
    <property type="entry name" value="UPF0054"/>
    <property type="match status" value="1"/>
</dbReference>
<protein>
    <recommendedName>
        <fullName evidence="1">Endoribonuclease YbeY</fullName>
        <ecNumber evidence="1">3.1.-.-</ecNumber>
    </recommendedName>
</protein>
<comment type="function">
    <text evidence="1">Single strand-specific metallo-endoribonuclease involved in late-stage 70S ribosome quality control and in maturation of the 3' terminus of the 16S rRNA.</text>
</comment>
<comment type="cofactor">
    <cofactor evidence="1">
        <name>Zn(2+)</name>
        <dbReference type="ChEBI" id="CHEBI:29105"/>
    </cofactor>
    <text evidence="1">Binds 1 zinc ion.</text>
</comment>
<comment type="subcellular location">
    <subcellularLocation>
        <location evidence="1">Cytoplasm</location>
    </subcellularLocation>
</comment>
<comment type="similarity">
    <text evidence="1">Belongs to the endoribonuclease YbeY family.</text>
</comment>
<name>YBEY_MYCPA</name>